<gene>
    <name evidence="6" type="ordered locus">Mhun_0832</name>
</gene>
<evidence type="ECO:0000255" key="1">
    <source>
        <dbReference type="HAMAP-Rule" id="MF_02224"/>
    </source>
</evidence>
<evidence type="ECO:0000269" key="2">
    <source>
    </source>
</evidence>
<evidence type="ECO:0000303" key="3">
    <source>
    </source>
</evidence>
<evidence type="ECO:0000305" key="4"/>
<evidence type="ECO:0000305" key="5">
    <source>
    </source>
</evidence>
<evidence type="ECO:0000312" key="6">
    <source>
        <dbReference type="EMBL" id="ABD40584.1"/>
    </source>
</evidence>
<protein>
    <recommendedName>
        <fullName evidence="1 4">4-phosphopantoate--beta-alanine ligase</fullName>
        <ecNumber evidence="1 2">6.3.2.36</ecNumber>
    </recommendedName>
    <alternativeName>
        <fullName evidence="1 3">Phosphopantothenate synthetase</fullName>
        <shortName evidence="1 3">PPS</shortName>
    </alternativeName>
</protein>
<name>PPS_METHJ</name>
<comment type="function">
    <text evidence="1 2">Catalyzes the condensation of (R)-4-phosphopantoate and beta-alanine to 4'-phosphopantothenate in the CoA biosynthesis pathway.</text>
</comment>
<comment type="catalytic activity">
    <reaction evidence="1 2">
        <text>(R)-4-phosphopantoate + beta-alanine + ATP = (R)-4'-phosphopantothenate + AMP + diphosphate + H(+)</text>
        <dbReference type="Rhea" id="RHEA:27930"/>
        <dbReference type="ChEBI" id="CHEBI:10986"/>
        <dbReference type="ChEBI" id="CHEBI:15378"/>
        <dbReference type="ChEBI" id="CHEBI:30616"/>
        <dbReference type="ChEBI" id="CHEBI:33019"/>
        <dbReference type="ChEBI" id="CHEBI:57966"/>
        <dbReference type="ChEBI" id="CHEBI:61294"/>
        <dbReference type="ChEBI" id="CHEBI:456215"/>
        <dbReference type="EC" id="6.3.2.36"/>
    </reaction>
</comment>
<comment type="pathway">
    <text evidence="1 5">Cofactor biosynthesis; coenzyme A biosynthesis.</text>
</comment>
<comment type="subunit">
    <text evidence="1">Homodimer.</text>
</comment>
<comment type="similarity">
    <text evidence="1 4">Belongs to the archaeal phosphopantothenate synthetase family.</text>
</comment>
<accession>Q2FUA9</accession>
<keyword id="KW-0067">ATP-binding</keyword>
<keyword id="KW-0173">Coenzyme A biosynthesis</keyword>
<keyword id="KW-0436">Ligase</keyword>
<keyword id="KW-0547">Nucleotide-binding</keyword>
<keyword id="KW-1185">Reference proteome</keyword>
<dbReference type="EC" id="6.3.2.36" evidence="1 2"/>
<dbReference type="EMBL" id="CP000254">
    <property type="protein sequence ID" value="ABD40584.1"/>
    <property type="molecule type" value="Genomic_DNA"/>
</dbReference>
<dbReference type="RefSeq" id="WP_011447863.1">
    <property type="nucleotide sequence ID" value="NC_007796.1"/>
</dbReference>
<dbReference type="SMR" id="Q2FUA9"/>
<dbReference type="FunCoup" id="Q2FUA9">
    <property type="interactions" value="92"/>
</dbReference>
<dbReference type="STRING" id="323259.Mhun_0832"/>
<dbReference type="EnsemblBacteria" id="ABD40584">
    <property type="protein sequence ID" value="ABD40584"/>
    <property type="gene ID" value="Mhun_0832"/>
</dbReference>
<dbReference type="GeneID" id="3922283"/>
<dbReference type="KEGG" id="mhu:Mhun_0832"/>
<dbReference type="eggNOG" id="arCOG04262">
    <property type="taxonomic scope" value="Archaea"/>
</dbReference>
<dbReference type="HOGENOM" id="CLU_078701_0_0_2"/>
<dbReference type="InParanoid" id="Q2FUA9"/>
<dbReference type="OrthoDB" id="10078at2157"/>
<dbReference type="BRENDA" id="6.3.2.36">
    <property type="organism ID" value="3282"/>
</dbReference>
<dbReference type="UniPathway" id="UPA00241"/>
<dbReference type="Proteomes" id="UP000001941">
    <property type="component" value="Chromosome"/>
</dbReference>
<dbReference type="GO" id="GO:0016881">
    <property type="term" value="F:acid-amino acid ligase activity"/>
    <property type="evidence" value="ECO:0007669"/>
    <property type="project" value="UniProtKB-UniRule"/>
</dbReference>
<dbReference type="GO" id="GO:0005524">
    <property type="term" value="F:ATP binding"/>
    <property type="evidence" value="ECO:0007669"/>
    <property type="project" value="UniProtKB-KW"/>
</dbReference>
<dbReference type="GO" id="GO:0015937">
    <property type="term" value="P:coenzyme A biosynthetic process"/>
    <property type="evidence" value="ECO:0007669"/>
    <property type="project" value="UniProtKB-UniRule"/>
</dbReference>
<dbReference type="Gene3D" id="3.40.50.12640">
    <property type="entry name" value="Phosphopantoate/pantothenate synthetase"/>
    <property type="match status" value="1"/>
</dbReference>
<dbReference type="HAMAP" id="MF_02224">
    <property type="entry name" value="PPS"/>
    <property type="match status" value="1"/>
</dbReference>
<dbReference type="InterPro" id="IPR002855">
    <property type="entry name" value="PPS/PS"/>
</dbReference>
<dbReference type="InterPro" id="IPR038138">
    <property type="entry name" value="PPS/PS_sf"/>
</dbReference>
<dbReference type="NCBIfam" id="NF041123">
    <property type="entry name" value="phpantohe_syn_Arch"/>
    <property type="match status" value="1"/>
</dbReference>
<dbReference type="NCBIfam" id="NF010324">
    <property type="entry name" value="PRK13761.1"/>
    <property type="match status" value="1"/>
</dbReference>
<dbReference type="PANTHER" id="PTHR40695">
    <property type="entry name" value="4-PHOSPHOPANTOATE--BETA-ALANINE LIGASE"/>
    <property type="match status" value="1"/>
</dbReference>
<dbReference type="PANTHER" id="PTHR40695:SF1">
    <property type="entry name" value="4-PHOSPHOPANTOATE--BETA-ALANINE LIGASE"/>
    <property type="match status" value="1"/>
</dbReference>
<dbReference type="Pfam" id="PF02006">
    <property type="entry name" value="PPS_PS"/>
    <property type="match status" value="1"/>
</dbReference>
<dbReference type="PIRSF" id="PIRSF004853">
    <property type="entry name" value="UCP004853"/>
    <property type="match status" value="1"/>
</dbReference>
<reference key="1">
    <citation type="journal article" date="2016" name="Stand. Genomic Sci.">
        <title>Complete genome sequence of Methanospirillum hungatei type strain JF1.</title>
        <authorList>
            <person name="Gunsalus R.P."/>
            <person name="Cook L.E."/>
            <person name="Crable B."/>
            <person name="Rohlin L."/>
            <person name="McDonald E."/>
            <person name="Mouttaki H."/>
            <person name="Sieber J.R."/>
            <person name="Poweleit N."/>
            <person name="Zhou H."/>
            <person name="Lapidus A.L."/>
            <person name="Daligault H.E."/>
            <person name="Land M."/>
            <person name="Gilna P."/>
            <person name="Ivanova N."/>
            <person name="Kyrpides N."/>
            <person name="Culley D.E."/>
            <person name="McInerney M.J."/>
        </authorList>
    </citation>
    <scope>NUCLEOTIDE SEQUENCE [LARGE SCALE GENOMIC DNA]</scope>
    <source>
        <strain>ATCC 27890 / DSM 864 / NBRC 100397 / JF-1</strain>
    </source>
</reference>
<reference key="2">
    <citation type="journal article" date="2013" name="J. Biosci. Bioeng.">
        <title>Identification of pantoate kinase and phosphopantothenate synthetase from Methanospirillum hungatei.</title>
        <authorList>
            <person name="Katoh H."/>
            <person name="Tamaki H."/>
            <person name="Tokutake Y."/>
            <person name="Hanada S."/>
            <person name="Chohnan S."/>
        </authorList>
    </citation>
    <scope>FUNCTION</scope>
    <scope>CATALYTIC ACTIVITY</scope>
    <scope>PATHWAY</scope>
    <source>
        <strain>ATCC 27890 / DSM 864 / NBRC 100397 / JF-1</strain>
    </source>
</reference>
<feature type="chain" id="PRO_0000448251" description="4-phosphopantoate--beta-alanine ligase">
    <location>
        <begin position="1"/>
        <end position="243"/>
    </location>
</feature>
<feature type="binding site" evidence="1">
    <location>
        <position position="15"/>
    </location>
    <ligand>
        <name>ATP</name>
        <dbReference type="ChEBI" id="CHEBI:30616"/>
    </ligand>
</feature>
<feature type="binding site" evidence="1">
    <location>
        <position position="37"/>
    </location>
    <ligand>
        <name>ATP</name>
        <dbReference type="ChEBI" id="CHEBI:30616"/>
    </ligand>
</feature>
<feature type="binding site" evidence="1">
    <location>
        <begin position="176"/>
        <end position="178"/>
    </location>
    <ligand>
        <name>ATP</name>
        <dbReference type="ChEBI" id="CHEBI:30616"/>
    </ligand>
</feature>
<feature type="binding site" evidence="1">
    <location>
        <begin position="182"/>
        <end position="183"/>
    </location>
    <ligand>
        <name>ATP</name>
        <dbReference type="ChEBI" id="CHEBI:30616"/>
    </ligand>
</feature>
<proteinExistence type="evidence at protein level"/>
<organism>
    <name type="scientific">Methanospirillum hungatei JF-1 (strain ATCC 27890 / DSM 864 / NBRC 100397 / JF-1)</name>
    <dbReference type="NCBI Taxonomy" id="323259"/>
    <lineage>
        <taxon>Archaea</taxon>
        <taxon>Methanobacteriati</taxon>
        <taxon>Methanobacteriota</taxon>
        <taxon>Stenosarchaea group</taxon>
        <taxon>Methanomicrobia</taxon>
        <taxon>Methanomicrobiales</taxon>
        <taxon>Methanospirillaceae</taxon>
        <taxon>Methanospirillum</taxon>
    </lineage>
</organism>
<sequence>MIPESHPRYKSLITREKLAQYTKTGIVSLEGLTAHGRGEAFDYLLGEETTESALRAEKIAAALLLSANHPVISVNGNTAALAAKEIAQLQLASKARVEVNLFHRTDERVQAISGLLKEHGITLVEGTVSRYIPLDHDRGLCHFDGMHSADVVLVPLEDGDRAQALIDLGKKVIAIDLNPLSRTSKVATVPVIDEVTRALANIARFCTELDQDEITGLTREIHGTGFIRDALEYIRERLLNVLD</sequence>